<keyword id="KW-1185">Reference proteome</keyword>
<keyword id="KW-0687">Ribonucleoprotein</keyword>
<keyword id="KW-0689">Ribosomal protein</keyword>
<keyword id="KW-0694">RNA-binding</keyword>
<keyword id="KW-0699">rRNA-binding</keyword>
<feature type="chain" id="PRO_0000126464" description="Small ribosomal subunit protein uS8">
    <location>
        <begin position="1"/>
        <end position="133"/>
    </location>
</feature>
<protein>
    <recommendedName>
        <fullName evidence="1">Small ribosomal subunit protein uS8</fullName>
    </recommendedName>
    <alternativeName>
        <fullName evidence="2">30S ribosomal protein S8</fullName>
    </alternativeName>
</protein>
<accession>Q7V532</accession>
<sequence length="133" mass="14859">MANHDPISDMLTRIRNASEKRHQTTRVPASRMSRSIAKVLQQEGFISEISEEGEGVRTHLVLELKYSGKHRHPTIRSMQRVSKPGLRIYKNTRALPKVLGGLGMAIISTSKGVMSDRDARKQGVGGEVLCYVY</sequence>
<organism>
    <name type="scientific">Prochlorococcus marinus (strain MIT 9313)</name>
    <dbReference type="NCBI Taxonomy" id="74547"/>
    <lineage>
        <taxon>Bacteria</taxon>
        <taxon>Bacillati</taxon>
        <taxon>Cyanobacteriota</taxon>
        <taxon>Cyanophyceae</taxon>
        <taxon>Synechococcales</taxon>
        <taxon>Prochlorococcaceae</taxon>
        <taxon>Prochlorococcus</taxon>
    </lineage>
</organism>
<proteinExistence type="inferred from homology"/>
<name>RS8_PROMM</name>
<comment type="function">
    <text evidence="1">One of the primary rRNA binding proteins, it binds directly to 16S rRNA central domain where it helps coordinate assembly of the platform of the 30S subunit.</text>
</comment>
<comment type="subunit">
    <text evidence="1">Part of the 30S ribosomal subunit. Contacts proteins S5 and S12.</text>
</comment>
<comment type="similarity">
    <text evidence="1">Belongs to the universal ribosomal protein uS8 family.</text>
</comment>
<dbReference type="EMBL" id="BX548175">
    <property type="protein sequence ID" value="CAE21920.1"/>
    <property type="molecule type" value="Genomic_DNA"/>
</dbReference>
<dbReference type="RefSeq" id="WP_011131112.1">
    <property type="nucleotide sequence ID" value="NC_005071.1"/>
</dbReference>
<dbReference type="SMR" id="Q7V532"/>
<dbReference type="KEGG" id="pmt:PMT_1745"/>
<dbReference type="eggNOG" id="COG0096">
    <property type="taxonomic scope" value="Bacteria"/>
</dbReference>
<dbReference type="HOGENOM" id="CLU_098428_0_2_3"/>
<dbReference type="OrthoDB" id="9802617at2"/>
<dbReference type="Proteomes" id="UP000001423">
    <property type="component" value="Chromosome"/>
</dbReference>
<dbReference type="GO" id="GO:1990904">
    <property type="term" value="C:ribonucleoprotein complex"/>
    <property type="evidence" value="ECO:0007669"/>
    <property type="project" value="UniProtKB-KW"/>
</dbReference>
<dbReference type="GO" id="GO:0005840">
    <property type="term" value="C:ribosome"/>
    <property type="evidence" value="ECO:0007669"/>
    <property type="project" value="UniProtKB-KW"/>
</dbReference>
<dbReference type="GO" id="GO:0019843">
    <property type="term" value="F:rRNA binding"/>
    <property type="evidence" value="ECO:0007669"/>
    <property type="project" value="UniProtKB-UniRule"/>
</dbReference>
<dbReference type="GO" id="GO:0003735">
    <property type="term" value="F:structural constituent of ribosome"/>
    <property type="evidence" value="ECO:0007669"/>
    <property type="project" value="InterPro"/>
</dbReference>
<dbReference type="GO" id="GO:0006412">
    <property type="term" value="P:translation"/>
    <property type="evidence" value="ECO:0007669"/>
    <property type="project" value="UniProtKB-UniRule"/>
</dbReference>
<dbReference type="FunFam" id="3.30.1370.30:FF:000002">
    <property type="entry name" value="30S ribosomal protein S8"/>
    <property type="match status" value="1"/>
</dbReference>
<dbReference type="FunFam" id="3.30.1490.10:FF:000001">
    <property type="entry name" value="30S ribosomal protein S8"/>
    <property type="match status" value="1"/>
</dbReference>
<dbReference type="Gene3D" id="3.30.1370.30">
    <property type="match status" value="1"/>
</dbReference>
<dbReference type="Gene3D" id="3.30.1490.10">
    <property type="match status" value="1"/>
</dbReference>
<dbReference type="HAMAP" id="MF_01302_B">
    <property type="entry name" value="Ribosomal_uS8_B"/>
    <property type="match status" value="1"/>
</dbReference>
<dbReference type="InterPro" id="IPR000630">
    <property type="entry name" value="Ribosomal_uS8"/>
</dbReference>
<dbReference type="InterPro" id="IPR047863">
    <property type="entry name" value="Ribosomal_uS8_CS"/>
</dbReference>
<dbReference type="InterPro" id="IPR035987">
    <property type="entry name" value="Ribosomal_uS8_sf"/>
</dbReference>
<dbReference type="NCBIfam" id="NF001109">
    <property type="entry name" value="PRK00136.1"/>
    <property type="match status" value="1"/>
</dbReference>
<dbReference type="PANTHER" id="PTHR11758">
    <property type="entry name" value="40S RIBOSOMAL PROTEIN S15A"/>
    <property type="match status" value="1"/>
</dbReference>
<dbReference type="Pfam" id="PF00410">
    <property type="entry name" value="Ribosomal_S8"/>
    <property type="match status" value="1"/>
</dbReference>
<dbReference type="SUPFAM" id="SSF56047">
    <property type="entry name" value="Ribosomal protein S8"/>
    <property type="match status" value="1"/>
</dbReference>
<dbReference type="PROSITE" id="PS00053">
    <property type="entry name" value="RIBOSOMAL_S8"/>
    <property type="match status" value="1"/>
</dbReference>
<reference key="1">
    <citation type="journal article" date="2003" name="Nature">
        <title>Genome divergence in two Prochlorococcus ecotypes reflects oceanic niche differentiation.</title>
        <authorList>
            <person name="Rocap G."/>
            <person name="Larimer F.W."/>
            <person name="Lamerdin J.E."/>
            <person name="Malfatti S."/>
            <person name="Chain P."/>
            <person name="Ahlgren N.A."/>
            <person name="Arellano A."/>
            <person name="Coleman M."/>
            <person name="Hauser L."/>
            <person name="Hess W.R."/>
            <person name="Johnson Z.I."/>
            <person name="Land M.L."/>
            <person name="Lindell D."/>
            <person name="Post A.F."/>
            <person name="Regala W."/>
            <person name="Shah M."/>
            <person name="Shaw S.L."/>
            <person name="Steglich C."/>
            <person name="Sullivan M.B."/>
            <person name="Ting C.S."/>
            <person name="Tolonen A."/>
            <person name="Webb E.A."/>
            <person name="Zinser E.R."/>
            <person name="Chisholm S.W."/>
        </authorList>
    </citation>
    <scope>NUCLEOTIDE SEQUENCE [LARGE SCALE GENOMIC DNA]</scope>
    <source>
        <strain>MIT 9313</strain>
    </source>
</reference>
<gene>
    <name evidence="1" type="primary">rpsH</name>
    <name evidence="1" type="synonym">rps8</name>
    <name type="ordered locus">PMT_1745</name>
</gene>
<evidence type="ECO:0000255" key="1">
    <source>
        <dbReference type="HAMAP-Rule" id="MF_01302"/>
    </source>
</evidence>
<evidence type="ECO:0000305" key="2"/>